<organism>
    <name type="scientific">Drosophila melanogaster</name>
    <name type="common">Fruit fly</name>
    <dbReference type="NCBI Taxonomy" id="7227"/>
    <lineage>
        <taxon>Eukaryota</taxon>
        <taxon>Metazoa</taxon>
        <taxon>Ecdysozoa</taxon>
        <taxon>Arthropoda</taxon>
        <taxon>Hexapoda</taxon>
        <taxon>Insecta</taxon>
        <taxon>Pterygota</taxon>
        <taxon>Neoptera</taxon>
        <taxon>Endopterygota</taxon>
        <taxon>Diptera</taxon>
        <taxon>Brachycera</taxon>
        <taxon>Muscomorpha</taxon>
        <taxon>Ephydroidea</taxon>
        <taxon>Drosophilidae</taxon>
        <taxon>Drosophila</taxon>
        <taxon>Sophophora</taxon>
    </lineage>
</organism>
<keyword id="KW-0007">Acetylation</keyword>
<keyword id="KW-0067">ATP-binding</keyword>
<keyword id="KW-0963">Cytoplasm</keyword>
<keyword id="KW-0206">Cytoskeleton</keyword>
<keyword id="KW-0378">Hydrolase</keyword>
<keyword id="KW-0488">Methylation</keyword>
<keyword id="KW-0547">Nucleotide-binding</keyword>
<keyword id="KW-0558">Oxidation</keyword>
<keyword id="KW-1185">Reference proteome</keyword>
<reference key="1">
    <citation type="journal article" date="1981" name="Cell">
        <title>The actin genes of Drosophila: protein coding regions are highly conserved but intron positions are not.</title>
        <authorList>
            <person name="Fyrberg E.A."/>
            <person name="Bond B.J."/>
            <person name="Hershey N.D."/>
            <person name="Mixter K.S."/>
            <person name="Davidson N."/>
        </authorList>
    </citation>
    <scope>NUCLEOTIDE SEQUENCE [GENOMIC DNA]</scope>
</reference>
<reference key="2">
    <citation type="submission" date="1985-06" db="EMBL/GenBank/DDBJ databases">
        <authorList>
            <person name="Fyrberg E.A."/>
            <person name="Bond B.J."/>
            <person name="Hershey N.D."/>
            <person name="Mixter K.S."/>
            <person name="Davidson N."/>
        </authorList>
    </citation>
    <scope>NUCLEOTIDE SEQUENCE [GENOMIC DNA]</scope>
</reference>
<reference key="3">
    <citation type="journal article" date="2000" name="Science">
        <title>The genome sequence of Drosophila melanogaster.</title>
        <authorList>
            <person name="Adams M.D."/>
            <person name="Celniker S.E."/>
            <person name="Holt R.A."/>
            <person name="Evans C.A."/>
            <person name="Gocayne J.D."/>
            <person name="Amanatides P.G."/>
            <person name="Scherer S.E."/>
            <person name="Li P.W."/>
            <person name="Hoskins R.A."/>
            <person name="Galle R.F."/>
            <person name="George R.A."/>
            <person name="Lewis S.E."/>
            <person name="Richards S."/>
            <person name="Ashburner M."/>
            <person name="Henderson S.N."/>
            <person name="Sutton G.G."/>
            <person name="Wortman J.R."/>
            <person name="Yandell M.D."/>
            <person name="Zhang Q."/>
            <person name="Chen L.X."/>
            <person name="Brandon R.C."/>
            <person name="Rogers Y.-H.C."/>
            <person name="Blazej R.G."/>
            <person name="Champe M."/>
            <person name="Pfeiffer B.D."/>
            <person name="Wan K.H."/>
            <person name="Doyle C."/>
            <person name="Baxter E.G."/>
            <person name="Helt G."/>
            <person name="Nelson C.R."/>
            <person name="Miklos G.L.G."/>
            <person name="Abril J.F."/>
            <person name="Agbayani A."/>
            <person name="An H.-J."/>
            <person name="Andrews-Pfannkoch C."/>
            <person name="Baldwin D."/>
            <person name="Ballew R.M."/>
            <person name="Basu A."/>
            <person name="Baxendale J."/>
            <person name="Bayraktaroglu L."/>
            <person name="Beasley E.M."/>
            <person name="Beeson K.Y."/>
            <person name="Benos P.V."/>
            <person name="Berman B.P."/>
            <person name="Bhandari D."/>
            <person name="Bolshakov S."/>
            <person name="Borkova D."/>
            <person name="Botchan M.R."/>
            <person name="Bouck J."/>
            <person name="Brokstein P."/>
            <person name="Brottier P."/>
            <person name="Burtis K.C."/>
            <person name="Busam D.A."/>
            <person name="Butler H."/>
            <person name="Cadieu E."/>
            <person name="Center A."/>
            <person name="Chandra I."/>
            <person name="Cherry J.M."/>
            <person name="Cawley S."/>
            <person name="Dahlke C."/>
            <person name="Davenport L.B."/>
            <person name="Davies P."/>
            <person name="de Pablos B."/>
            <person name="Delcher A."/>
            <person name="Deng Z."/>
            <person name="Mays A.D."/>
            <person name="Dew I."/>
            <person name="Dietz S.M."/>
            <person name="Dodson K."/>
            <person name="Doup L.E."/>
            <person name="Downes M."/>
            <person name="Dugan-Rocha S."/>
            <person name="Dunkov B.C."/>
            <person name="Dunn P."/>
            <person name="Durbin K.J."/>
            <person name="Evangelista C.C."/>
            <person name="Ferraz C."/>
            <person name="Ferriera S."/>
            <person name="Fleischmann W."/>
            <person name="Fosler C."/>
            <person name="Gabrielian A.E."/>
            <person name="Garg N.S."/>
            <person name="Gelbart W.M."/>
            <person name="Glasser K."/>
            <person name="Glodek A."/>
            <person name="Gong F."/>
            <person name="Gorrell J.H."/>
            <person name="Gu Z."/>
            <person name="Guan P."/>
            <person name="Harris M."/>
            <person name="Harris N.L."/>
            <person name="Harvey D.A."/>
            <person name="Heiman T.J."/>
            <person name="Hernandez J.R."/>
            <person name="Houck J."/>
            <person name="Hostin D."/>
            <person name="Houston K.A."/>
            <person name="Howland T.J."/>
            <person name="Wei M.-H."/>
            <person name="Ibegwam C."/>
            <person name="Jalali M."/>
            <person name="Kalush F."/>
            <person name="Karpen G.H."/>
            <person name="Ke Z."/>
            <person name="Kennison J.A."/>
            <person name="Ketchum K.A."/>
            <person name="Kimmel B.E."/>
            <person name="Kodira C.D."/>
            <person name="Kraft C.L."/>
            <person name="Kravitz S."/>
            <person name="Kulp D."/>
            <person name="Lai Z."/>
            <person name="Lasko P."/>
            <person name="Lei Y."/>
            <person name="Levitsky A.A."/>
            <person name="Li J.H."/>
            <person name="Li Z."/>
            <person name="Liang Y."/>
            <person name="Lin X."/>
            <person name="Liu X."/>
            <person name="Mattei B."/>
            <person name="McIntosh T.C."/>
            <person name="McLeod M.P."/>
            <person name="McPherson D."/>
            <person name="Merkulov G."/>
            <person name="Milshina N.V."/>
            <person name="Mobarry C."/>
            <person name="Morris J."/>
            <person name="Moshrefi A."/>
            <person name="Mount S.M."/>
            <person name="Moy M."/>
            <person name="Murphy B."/>
            <person name="Murphy L."/>
            <person name="Muzny D.M."/>
            <person name="Nelson D.L."/>
            <person name="Nelson D.R."/>
            <person name="Nelson K.A."/>
            <person name="Nixon K."/>
            <person name="Nusskern D.R."/>
            <person name="Pacleb J.M."/>
            <person name="Palazzolo M."/>
            <person name="Pittman G.S."/>
            <person name="Pan S."/>
            <person name="Pollard J."/>
            <person name="Puri V."/>
            <person name="Reese M.G."/>
            <person name="Reinert K."/>
            <person name="Remington K."/>
            <person name="Saunders R.D.C."/>
            <person name="Scheeler F."/>
            <person name="Shen H."/>
            <person name="Shue B.C."/>
            <person name="Siden-Kiamos I."/>
            <person name="Simpson M."/>
            <person name="Skupski M.P."/>
            <person name="Smith T.J."/>
            <person name="Spier E."/>
            <person name="Spradling A.C."/>
            <person name="Stapleton M."/>
            <person name="Strong R."/>
            <person name="Sun E."/>
            <person name="Svirskas R."/>
            <person name="Tector C."/>
            <person name="Turner R."/>
            <person name="Venter E."/>
            <person name="Wang A.H."/>
            <person name="Wang X."/>
            <person name="Wang Z.-Y."/>
            <person name="Wassarman D.A."/>
            <person name="Weinstock G.M."/>
            <person name="Weissenbach J."/>
            <person name="Williams S.M."/>
            <person name="Woodage T."/>
            <person name="Worley K.C."/>
            <person name="Wu D."/>
            <person name="Yang S."/>
            <person name="Yao Q.A."/>
            <person name="Ye J."/>
            <person name="Yeh R.-F."/>
            <person name="Zaveri J.S."/>
            <person name="Zhan M."/>
            <person name="Zhang G."/>
            <person name="Zhao Q."/>
            <person name="Zheng L."/>
            <person name="Zheng X.H."/>
            <person name="Zhong F.N."/>
            <person name="Zhong W."/>
            <person name="Zhou X."/>
            <person name="Zhu S.C."/>
            <person name="Zhu X."/>
            <person name="Smith H.O."/>
            <person name="Gibbs R.A."/>
            <person name="Myers E.W."/>
            <person name="Rubin G.M."/>
            <person name="Venter J.C."/>
        </authorList>
    </citation>
    <scope>NUCLEOTIDE SEQUENCE [LARGE SCALE GENOMIC DNA]</scope>
    <source>
        <strain>Berkeley</strain>
    </source>
</reference>
<reference key="4">
    <citation type="journal article" date="2002" name="Genome Biol.">
        <title>Annotation of the Drosophila melanogaster euchromatic genome: a systematic review.</title>
        <authorList>
            <person name="Misra S."/>
            <person name="Crosby M.A."/>
            <person name="Mungall C.J."/>
            <person name="Matthews B.B."/>
            <person name="Campbell K.S."/>
            <person name="Hradecky P."/>
            <person name="Huang Y."/>
            <person name="Kaminker J.S."/>
            <person name="Millburn G.H."/>
            <person name="Prochnik S.E."/>
            <person name="Smith C.D."/>
            <person name="Tupy J.L."/>
            <person name="Whitfield E.J."/>
            <person name="Bayraktaroglu L."/>
            <person name="Berman B.P."/>
            <person name="Bettencourt B.R."/>
            <person name="Celniker S.E."/>
            <person name="de Grey A.D.N.J."/>
            <person name="Drysdale R.A."/>
            <person name="Harris N.L."/>
            <person name="Richter J."/>
            <person name="Russo S."/>
            <person name="Schroeder A.J."/>
            <person name="Shu S.Q."/>
            <person name="Stapleton M."/>
            <person name="Yamada C."/>
            <person name="Ashburner M."/>
            <person name="Gelbart W.M."/>
            <person name="Rubin G.M."/>
            <person name="Lewis S.E."/>
        </authorList>
    </citation>
    <scope>GENOME REANNOTATION</scope>
    <source>
        <strain>Berkeley</strain>
    </source>
</reference>
<reference key="5">
    <citation type="journal article" date="1997" name="Dev. Biol.">
        <title>The Drosophila ovarian tumor gene is required for the organization of actin filaments during multiple stages in oogenesis.</title>
        <authorList>
            <person name="Rodesch C."/>
            <person name="Pettus J."/>
            <person name="Nagoshi R.N."/>
        </authorList>
    </citation>
    <scope>SUBCELLULAR LOCATION</scope>
</reference>
<reference key="6">
    <citation type="journal article" date="2011" name="Science">
        <title>Direct redox regulation of F-actin assembly and disassembly by Mical.</title>
        <authorList>
            <person name="Hung R.J."/>
            <person name="Pak C.W."/>
            <person name="Terman J.R."/>
        </authorList>
    </citation>
    <scope>OXIDATION AT MET-45 AND MET-48</scope>
</reference>
<reference key="7">
    <citation type="journal article" date="2018" name="Elife">
        <title>SETD3 protein is the actin-specific histidine N-methyltransferase.</title>
        <authorList>
            <person name="Kwiatkowski S."/>
            <person name="Seliga A.K."/>
            <person name="Vertommen D."/>
            <person name="Terreri M."/>
            <person name="Ishikawa T."/>
            <person name="Grabowska I."/>
            <person name="Tiebe M."/>
            <person name="Teleman A.A."/>
            <person name="Jagielski A.K."/>
            <person name="Veiga-da-Cunha M."/>
            <person name="Drozak J."/>
        </authorList>
    </citation>
    <scope>METHYLATION AT HIS-74</scope>
</reference>
<sequence length="376" mass="41835">MCDDEVAALVVDNGSGMCKAGFAGDDAPRAVFPSIVGRPRHQGVMVGMGQKDSYVGDEAQSKRGILTLKYPIEHGIITNWDDMEKIWHHTFYNELRVAPEEHPVLLTEAPLNPKANREKMTQIMFETFNSPAMYVAIQAVLSLYASGRTTGIVLDSGDGVSHTVPIYEGYALPHAILRLDLAGRDLTDYLMKILTERGYSFTTTAEREIVRDIKEKLCYVALDFEQEMATAAASTSLEKSYELPDGQVITIGNERFRCPESLFQPSFLGMESCGIHETVYNSIMKCDVDIRKDLYANIVMSGGTTMYPGIADRMQKEITSLAPSTIKIKIIAPPERKYSVWIGGSILASLSTFQQMWISKEEYDESGPGIVHRKCF</sequence>
<name>ACT3_DROME</name>
<gene>
    <name type="primary">Act57B</name>
    <name type="ORF">CG10067</name>
</gene>
<evidence type="ECO:0000250" key="1"/>
<evidence type="ECO:0000250" key="2">
    <source>
        <dbReference type="UniProtKB" id="P68134"/>
    </source>
</evidence>
<evidence type="ECO:0000250" key="3">
    <source>
        <dbReference type="UniProtKB" id="P68137"/>
    </source>
</evidence>
<evidence type="ECO:0000269" key="4">
    <source>
    </source>
</evidence>
<evidence type="ECO:0000269" key="5">
    <source>
    </source>
</evidence>
<evidence type="ECO:0000269" key="6">
    <source>
    </source>
</evidence>
<evidence type="ECO:0000305" key="7"/>
<feature type="propeptide" id="PRO_0000000660" description="Removed in mature form" evidence="1">
    <location>
        <begin position="1"/>
        <end position="2"/>
    </location>
</feature>
<feature type="chain" id="PRO_0000000661" description="Actin-57B">
    <location>
        <begin position="3"/>
        <end position="376"/>
    </location>
</feature>
<feature type="modified residue" description="N-acetylaspartate" evidence="1">
    <location>
        <position position="3"/>
    </location>
</feature>
<feature type="modified residue" description="Methionine sulfoxide" evidence="4">
    <location>
        <position position="45"/>
    </location>
</feature>
<feature type="modified residue" description="Methionine sulfoxide" evidence="4">
    <location>
        <position position="48"/>
    </location>
</feature>
<feature type="modified residue" description="Tele-methylhistidine" evidence="5">
    <location>
        <position position="74"/>
    </location>
</feature>
<comment type="function">
    <text>Actins are highly conserved proteins that are involved in various types of cell motility and are ubiquitously expressed in all eukaryotic cells.</text>
</comment>
<comment type="function">
    <text>Multiple isoforms are involved in various cellular functions such as cytoskeleton structure, cell mobility, chromosome movement and muscle contraction.</text>
</comment>
<comment type="catalytic activity">
    <reaction evidence="3">
        <text>ATP + H2O = ADP + phosphate + H(+)</text>
        <dbReference type="Rhea" id="RHEA:13065"/>
        <dbReference type="ChEBI" id="CHEBI:15377"/>
        <dbReference type="ChEBI" id="CHEBI:15378"/>
        <dbReference type="ChEBI" id="CHEBI:30616"/>
        <dbReference type="ChEBI" id="CHEBI:43474"/>
        <dbReference type="ChEBI" id="CHEBI:456216"/>
    </reaction>
</comment>
<comment type="subcellular location">
    <subcellularLocation>
        <location evidence="6">Cytoplasm</location>
        <location evidence="6">Cytoskeleton</location>
    </subcellularLocation>
    <text evidence="6">Associated with spectrosomes during female cystocyte proliferation and differentiation, but dissociates, or becomes undetectable, upon fusome maturation (PubMed:9344535). Component of the inner rim of ring canals connecting the cytoplasm of nurse cells and oocyte during oogenesis (PubMed:9344535).</text>
</comment>
<comment type="PTM">
    <text evidence="2">N-terminal cleavage of acetylated cysteine of immature actin by ACTMAP.</text>
</comment>
<comment type="PTM">
    <text evidence="4">Oxidation of Met-45 by Mical to form methionine sulfoxide promotes actin filament depolymerization. Methionine sulfoxide is produced stereospecifically, but it is not known whether the (S)-S-oxide or the (R)-S-oxide is produced.</text>
</comment>
<comment type="miscellaneous">
    <text>In Drosophila there are 6 closely related actin genes.</text>
</comment>
<comment type="similarity">
    <text evidence="7">Belongs to the actin family.</text>
</comment>
<accession>P53501</accession>
<accession>Q9W2Q0</accession>
<dbReference type="EC" id="3.6.4.-" evidence="3"/>
<dbReference type="EMBL" id="K00673">
    <property type="protein sequence ID" value="AAA28319.1"/>
    <property type="molecule type" value="Genomic_DNA"/>
</dbReference>
<dbReference type="EMBL" id="K00672">
    <property type="protein sequence ID" value="AAA28319.1"/>
    <property type="status" value="JOINED"/>
    <property type="molecule type" value="Genomic_DNA"/>
</dbReference>
<dbReference type="EMBL" id="AE013599">
    <property type="protein sequence ID" value="AAF46640.1"/>
    <property type="molecule type" value="Genomic_DNA"/>
</dbReference>
<dbReference type="RefSeq" id="NP_523800.1">
    <property type="nucleotide sequence ID" value="NM_079076.4"/>
</dbReference>
<dbReference type="SMR" id="P53501"/>
<dbReference type="BioGRID" id="63011">
    <property type="interactions" value="53"/>
</dbReference>
<dbReference type="DIP" id="DIP-17270N"/>
<dbReference type="FunCoup" id="P53501">
    <property type="interactions" value="15"/>
</dbReference>
<dbReference type="IntAct" id="P53501">
    <property type="interactions" value="22"/>
</dbReference>
<dbReference type="MINT" id="P53501"/>
<dbReference type="STRING" id="7227.FBpp0071448"/>
<dbReference type="PaxDb" id="7227-FBpp0071448"/>
<dbReference type="DNASU" id="37368"/>
<dbReference type="EnsemblMetazoa" id="FBtr0071519">
    <property type="protein sequence ID" value="FBpp0071448"/>
    <property type="gene ID" value="FBgn0000044"/>
</dbReference>
<dbReference type="GeneID" id="37368"/>
<dbReference type="KEGG" id="dme:Dmel_CG10067"/>
<dbReference type="AGR" id="FB:FBgn0000044"/>
<dbReference type="CTD" id="37368"/>
<dbReference type="FlyBase" id="FBgn0000044">
    <property type="gene designation" value="Act57B"/>
</dbReference>
<dbReference type="VEuPathDB" id="VectorBase:FBgn0000044"/>
<dbReference type="eggNOG" id="KOG0676">
    <property type="taxonomic scope" value="Eukaryota"/>
</dbReference>
<dbReference type="GeneTree" id="ENSGT00940000166560"/>
<dbReference type="HOGENOM" id="CLU_027965_0_2_1"/>
<dbReference type="InParanoid" id="P53501"/>
<dbReference type="OMA" id="FHAPAMY"/>
<dbReference type="OrthoDB" id="422673at2759"/>
<dbReference type="PhylomeDB" id="P53501"/>
<dbReference type="Reactome" id="R-DME-445355">
    <property type="pathway name" value="Smooth Muscle Contraction"/>
</dbReference>
<dbReference type="SignaLink" id="P53501"/>
<dbReference type="BioGRID-ORCS" id="37368">
    <property type="hits" value="0 hits in 3 CRISPR screens"/>
</dbReference>
<dbReference type="ChiTaRS" id="Act57B">
    <property type="organism name" value="fly"/>
</dbReference>
<dbReference type="GenomeRNAi" id="37368"/>
<dbReference type="PRO" id="PR:P53501"/>
<dbReference type="Proteomes" id="UP000000803">
    <property type="component" value="Chromosome 2R"/>
</dbReference>
<dbReference type="Bgee" id="FBgn0000044">
    <property type="expression patterns" value="Expressed in muscle cell in arthropod fat body and 139 other cell types or tissues"/>
</dbReference>
<dbReference type="ExpressionAtlas" id="P53501">
    <property type="expression patterns" value="baseline and differential"/>
</dbReference>
<dbReference type="GO" id="GO:0015629">
    <property type="term" value="C:actin cytoskeleton"/>
    <property type="evidence" value="ECO:0000318"/>
    <property type="project" value="GO_Central"/>
</dbReference>
<dbReference type="GO" id="GO:0005737">
    <property type="term" value="C:cytoplasm"/>
    <property type="evidence" value="ECO:0007669"/>
    <property type="project" value="UniProtKB-KW"/>
</dbReference>
<dbReference type="GO" id="GO:0005886">
    <property type="term" value="C:plasma membrane"/>
    <property type="evidence" value="ECO:0007005"/>
    <property type="project" value="FlyBase"/>
</dbReference>
<dbReference type="GO" id="GO:0005524">
    <property type="term" value="F:ATP binding"/>
    <property type="evidence" value="ECO:0007669"/>
    <property type="project" value="UniProtKB-KW"/>
</dbReference>
<dbReference type="GO" id="GO:0016787">
    <property type="term" value="F:hydrolase activity"/>
    <property type="evidence" value="ECO:0007669"/>
    <property type="project" value="UniProtKB-KW"/>
</dbReference>
<dbReference type="GO" id="GO:0000281">
    <property type="term" value="P:mitotic cytokinesis"/>
    <property type="evidence" value="ECO:0000318"/>
    <property type="project" value="GO_Central"/>
</dbReference>
<dbReference type="GO" id="GO:0030723">
    <property type="term" value="P:ovarian fusome organization"/>
    <property type="evidence" value="ECO:0000270"/>
    <property type="project" value="UniProtKB"/>
</dbReference>
<dbReference type="GO" id="GO:0050807">
    <property type="term" value="P:regulation of synapse organization"/>
    <property type="evidence" value="ECO:0000315"/>
    <property type="project" value="FlyBase"/>
</dbReference>
<dbReference type="CDD" id="cd10224">
    <property type="entry name" value="ASKHA_NBD_actin"/>
    <property type="match status" value="1"/>
</dbReference>
<dbReference type="FunFam" id="2.30.36.70:FF:000001">
    <property type="entry name" value="Actin, alpha skeletal muscle"/>
    <property type="match status" value="1"/>
</dbReference>
<dbReference type="FunFam" id="3.30.420.40:FF:000131">
    <property type="entry name" value="Actin, alpha skeletal muscle"/>
    <property type="match status" value="1"/>
</dbReference>
<dbReference type="FunFam" id="3.30.420.40:FF:000291">
    <property type="entry name" value="Actin, alpha skeletal muscle"/>
    <property type="match status" value="1"/>
</dbReference>
<dbReference type="FunFam" id="3.90.640.10:FF:000047">
    <property type="entry name" value="Actin, alpha skeletal muscle"/>
    <property type="match status" value="1"/>
</dbReference>
<dbReference type="FunFam" id="3.30.420.40:FF:000058">
    <property type="entry name" value="Putative actin-related protein 5"/>
    <property type="match status" value="1"/>
</dbReference>
<dbReference type="Gene3D" id="3.30.420.40">
    <property type="match status" value="2"/>
</dbReference>
<dbReference type="Gene3D" id="3.90.640.10">
    <property type="entry name" value="Actin, Chain A, domain 4"/>
    <property type="match status" value="1"/>
</dbReference>
<dbReference type="InterPro" id="IPR004000">
    <property type="entry name" value="Actin"/>
</dbReference>
<dbReference type="InterPro" id="IPR020902">
    <property type="entry name" value="Actin/actin-like_CS"/>
</dbReference>
<dbReference type="InterPro" id="IPR004001">
    <property type="entry name" value="Actin_CS"/>
</dbReference>
<dbReference type="InterPro" id="IPR043129">
    <property type="entry name" value="ATPase_NBD"/>
</dbReference>
<dbReference type="PANTHER" id="PTHR11937">
    <property type="entry name" value="ACTIN"/>
    <property type="match status" value="1"/>
</dbReference>
<dbReference type="Pfam" id="PF00022">
    <property type="entry name" value="Actin"/>
    <property type="match status" value="1"/>
</dbReference>
<dbReference type="PRINTS" id="PR00190">
    <property type="entry name" value="ACTIN"/>
</dbReference>
<dbReference type="SMART" id="SM00268">
    <property type="entry name" value="ACTIN"/>
    <property type="match status" value="1"/>
</dbReference>
<dbReference type="SUPFAM" id="SSF53067">
    <property type="entry name" value="Actin-like ATPase domain"/>
    <property type="match status" value="2"/>
</dbReference>
<dbReference type="PROSITE" id="PS00406">
    <property type="entry name" value="ACTINS_1"/>
    <property type="match status" value="1"/>
</dbReference>
<dbReference type="PROSITE" id="PS00432">
    <property type="entry name" value="ACTINS_2"/>
    <property type="match status" value="1"/>
</dbReference>
<dbReference type="PROSITE" id="PS01132">
    <property type="entry name" value="ACTINS_ACT_LIKE"/>
    <property type="match status" value="1"/>
</dbReference>
<protein>
    <recommendedName>
        <fullName>Actin-57B</fullName>
        <ecNumber evidence="3">3.6.4.-</ecNumber>
    </recommendedName>
</protein>
<proteinExistence type="evidence at protein level"/>